<proteinExistence type="inferred from homology"/>
<dbReference type="EC" id="2.7.1.71" evidence="1"/>
<dbReference type="EMBL" id="CT573326">
    <property type="protein sequence ID" value="CAK13294.1"/>
    <property type="molecule type" value="Genomic_DNA"/>
</dbReference>
<dbReference type="RefSeq" id="WP_011531754.1">
    <property type="nucleotide sequence ID" value="NC_008027.1"/>
</dbReference>
<dbReference type="SMR" id="Q1IGA8"/>
<dbReference type="STRING" id="384676.PSEEN0334"/>
<dbReference type="GeneID" id="32803675"/>
<dbReference type="KEGG" id="pen:PSEEN0334"/>
<dbReference type="eggNOG" id="COG0703">
    <property type="taxonomic scope" value="Bacteria"/>
</dbReference>
<dbReference type="HOGENOM" id="CLU_057607_2_2_6"/>
<dbReference type="OrthoDB" id="9800332at2"/>
<dbReference type="UniPathway" id="UPA00053">
    <property type="reaction ID" value="UER00088"/>
</dbReference>
<dbReference type="Proteomes" id="UP000000658">
    <property type="component" value="Chromosome"/>
</dbReference>
<dbReference type="GO" id="GO:0005829">
    <property type="term" value="C:cytosol"/>
    <property type="evidence" value="ECO:0007669"/>
    <property type="project" value="TreeGrafter"/>
</dbReference>
<dbReference type="GO" id="GO:0005524">
    <property type="term" value="F:ATP binding"/>
    <property type="evidence" value="ECO:0007669"/>
    <property type="project" value="UniProtKB-UniRule"/>
</dbReference>
<dbReference type="GO" id="GO:0000287">
    <property type="term" value="F:magnesium ion binding"/>
    <property type="evidence" value="ECO:0007669"/>
    <property type="project" value="UniProtKB-UniRule"/>
</dbReference>
<dbReference type="GO" id="GO:0004765">
    <property type="term" value="F:shikimate kinase activity"/>
    <property type="evidence" value="ECO:0007669"/>
    <property type="project" value="UniProtKB-UniRule"/>
</dbReference>
<dbReference type="GO" id="GO:0008652">
    <property type="term" value="P:amino acid biosynthetic process"/>
    <property type="evidence" value="ECO:0007669"/>
    <property type="project" value="UniProtKB-KW"/>
</dbReference>
<dbReference type="GO" id="GO:0009073">
    <property type="term" value="P:aromatic amino acid family biosynthetic process"/>
    <property type="evidence" value="ECO:0007669"/>
    <property type="project" value="UniProtKB-KW"/>
</dbReference>
<dbReference type="GO" id="GO:0009423">
    <property type="term" value="P:chorismate biosynthetic process"/>
    <property type="evidence" value="ECO:0007669"/>
    <property type="project" value="UniProtKB-UniRule"/>
</dbReference>
<dbReference type="CDD" id="cd00464">
    <property type="entry name" value="SK"/>
    <property type="match status" value="1"/>
</dbReference>
<dbReference type="Gene3D" id="3.40.50.300">
    <property type="entry name" value="P-loop containing nucleotide triphosphate hydrolases"/>
    <property type="match status" value="1"/>
</dbReference>
<dbReference type="HAMAP" id="MF_00109">
    <property type="entry name" value="Shikimate_kinase"/>
    <property type="match status" value="1"/>
</dbReference>
<dbReference type="InterPro" id="IPR027417">
    <property type="entry name" value="P-loop_NTPase"/>
</dbReference>
<dbReference type="InterPro" id="IPR031322">
    <property type="entry name" value="Shikimate/glucono_kinase"/>
</dbReference>
<dbReference type="InterPro" id="IPR000623">
    <property type="entry name" value="Shikimate_kinase/TSH1"/>
</dbReference>
<dbReference type="InterPro" id="IPR023000">
    <property type="entry name" value="Shikimate_kinase_CS"/>
</dbReference>
<dbReference type="NCBIfam" id="NF003456">
    <property type="entry name" value="PRK05057.1"/>
    <property type="match status" value="1"/>
</dbReference>
<dbReference type="PANTHER" id="PTHR21087">
    <property type="entry name" value="SHIKIMATE KINASE"/>
    <property type="match status" value="1"/>
</dbReference>
<dbReference type="PANTHER" id="PTHR21087:SF16">
    <property type="entry name" value="SHIKIMATE KINASE 1, CHLOROPLASTIC"/>
    <property type="match status" value="1"/>
</dbReference>
<dbReference type="Pfam" id="PF01202">
    <property type="entry name" value="SKI"/>
    <property type="match status" value="1"/>
</dbReference>
<dbReference type="PRINTS" id="PR01100">
    <property type="entry name" value="SHIKIMTKNASE"/>
</dbReference>
<dbReference type="SUPFAM" id="SSF52540">
    <property type="entry name" value="P-loop containing nucleoside triphosphate hydrolases"/>
    <property type="match status" value="1"/>
</dbReference>
<dbReference type="PROSITE" id="PS01128">
    <property type="entry name" value="SHIKIMATE_KINASE"/>
    <property type="match status" value="1"/>
</dbReference>
<feature type="chain" id="PRO_1000022987" description="Shikimate kinase">
    <location>
        <begin position="1"/>
        <end position="172"/>
    </location>
</feature>
<feature type="binding site" evidence="1">
    <location>
        <begin position="11"/>
        <end position="16"/>
    </location>
    <ligand>
        <name>ATP</name>
        <dbReference type="ChEBI" id="CHEBI:30616"/>
    </ligand>
</feature>
<feature type="binding site" evidence="1">
    <location>
        <position position="15"/>
    </location>
    <ligand>
        <name>Mg(2+)</name>
        <dbReference type="ChEBI" id="CHEBI:18420"/>
    </ligand>
</feature>
<feature type="binding site" evidence="1">
    <location>
        <position position="33"/>
    </location>
    <ligand>
        <name>substrate</name>
    </ligand>
</feature>
<feature type="binding site" evidence="1">
    <location>
        <position position="57"/>
    </location>
    <ligand>
        <name>substrate</name>
    </ligand>
</feature>
<feature type="binding site" evidence="1">
    <location>
        <position position="79"/>
    </location>
    <ligand>
        <name>substrate</name>
    </ligand>
</feature>
<feature type="binding site" evidence="1">
    <location>
        <position position="117"/>
    </location>
    <ligand>
        <name>ATP</name>
        <dbReference type="ChEBI" id="CHEBI:30616"/>
    </ligand>
</feature>
<feature type="binding site" evidence="1">
    <location>
        <position position="136"/>
    </location>
    <ligand>
        <name>substrate</name>
    </ligand>
</feature>
<feature type="binding site" evidence="1">
    <location>
        <position position="153"/>
    </location>
    <ligand>
        <name>ATP</name>
        <dbReference type="ChEBI" id="CHEBI:30616"/>
    </ligand>
</feature>
<sequence>MRNLILVGPMGAGKSTIGRLLAKELRLLFKDSDKEIELRTGANIPWIFDKEGEPGFREREQAMIAELCALDGVVLATGGGAVMRDANRAALRAGGRVVYLHASVEQQVGRTSRDRNRPLLRTANPEATLRALFEARDPLYREIADLVVETDERPPRMVVLDILERLQQLPPR</sequence>
<reference key="1">
    <citation type="journal article" date="2006" name="Nat. Biotechnol.">
        <title>Complete genome sequence of the entomopathogenic and metabolically versatile soil bacterium Pseudomonas entomophila.</title>
        <authorList>
            <person name="Vodovar N."/>
            <person name="Vallenet D."/>
            <person name="Cruveiller S."/>
            <person name="Rouy Z."/>
            <person name="Barbe V."/>
            <person name="Acosta C."/>
            <person name="Cattolico L."/>
            <person name="Jubin C."/>
            <person name="Lajus A."/>
            <person name="Segurens B."/>
            <person name="Vacherie B."/>
            <person name="Wincker P."/>
            <person name="Weissenbach J."/>
            <person name="Lemaitre B."/>
            <person name="Medigue C."/>
            <person name="Boccard F."/>
        </authorList>
    </citation>
    <scope>NUCLEOTIDE SEQUENCE [LARGE SCALE GENOMIC DNA]</scope>
    <source>
        <strain>L48</strain>
    </source>
</reference>
<protein>
    <recommendedName>
        <fullName evidence="1">Shikimate kinase</fullName>
        <shortName evidence="1">SK</shortName>
        <ecNumber evidence="1">2.7.1.71</ecNumber>
    </recommendedName>
</protein>
<name>AROK_PSEE4</name>
<evidence type="ECO:0000255" key="1">
    <source>
        <dbReference type="HAMAP-Rule" id="MF_00109"/>
    </source>
</evidence>
<organism>
    <name type="scientific">Pseudomonas entomophila (strain L48)</name>
    <dbReference type="NCBI Taxonomy" id="384676"/>
    <lineage>
        <taxon>Bacteria</taxon>
        <taxon>Pseudomonadati</taxon>
        <taxon>Pseudomonadota</taxon>
        <taxon>Gammaproteobacteria</taxon>
        <taxon>Pseudomonadales</taxon>
        <taxon>Pseudomonadaceae</taxon>
        <taxon>Pseudomonas</taxon>
    </lineage>
</organism>
<keyword id="KW-0028">Amino-acid biosynthesis</keyword>
<keyword id="KW-0057">Aromatic amino acid biosynthesis</keyword>
<keyword id="KW-0067">ATP-binding</keyword>
<keyword id="KW-0963">Cytoplasm</keyword>
<keyword id="KW-0418">Kinase</keyword>
<keyword id="KW-0460">Magnesium</keyword>
<keyword id="KW-0479">Metal-binding</keyword>
<keyword id="KW-0547">Nucleotide-binding</keyword>
<keyword id="KW-0808">Transferase</keyword>
<accession>Q1IGA8</accession>
<comment type="function">
    <text evidence="1">Catalyzes the specific phosphorylation of the 3-hydroxyl group of shikimic acid using ATP as a cosubstrate.</text>
</comment>
<comment type="catalytic activity">
    <reaction evidence="1">
        <text>shikimate + ATP = 3-phosphoshikimate + ADP + H(+)</text>
        <dbReference type="Rhea" id="RHEA:13121"/>
        <dbReference type="ChEBI" id="CHEBI:15378"/>
        <dbReference type="ChEBI" id="CHEBI:30616"/>
        <dbReference type="ChEBI" id="CHEBI:36208"/>
        <dbReference type="ChEBI" id="CHEBI:145989"/>
        <dbReference type="ChEBI" id="CHEBI:456216"/>
        <dbReference type="EC" id="2.7.1.71"/>
    </reaction>
</comment>
<comment type="cofactor">
    <cofactor evidence="1">
        <name>Mg(2+)</name>
        <dbReference type="ChEBI" id="CHEBI:18420"/>
    </cofactor>
    <text evidence="1">Binds 1 Mg(2+) ion per subunit.</text>
</comment>
<comment type="pathway">
    <text evidence="1">Metabolic intermediate biosynthesis; chorismate biosynthesis; chorismate from D-erythrose 4-phosphate and phosphoenolpyruvate: step 5/7.</text>
</comment>
<comment type="subunit">
    <text evidence="1">Monomer.</text>
</comment>
<comment type="subcellular location">
    <subcellularLocation>
        <location evidence="1">Cytoplasm</location>
    </subcellularLocation>
</comment>
<comment type="similarity">
    <text evidence="1">Belongs to the shikimate kinase family.</text>
</comment>
<gene>
    <name evidence="1" type="primary">aroK</name>
    <name type="ordered locus">PSEEN0334</name>
</gene>